<reference key="1">
    <citation type="journal article" date="2002" name="Nature">
        <title>Sequence and analysis of chromosome 2 of Dictyostelium discoideum.</title>
        <authorList>
            <person name="Gloeckner G."/>
            <person name="Eichinger L."/>
            <person name="Szafranski K."/>
            <person name="Pachebat J.A."/>
            <person name="Bankier A.T."/>
            <person name="Dear P.H."/>
            <person name="Lehmann R."/>
            <person name="Baumgart C."/>
            <person name="Parra G."/>
            <person name="Abril J.F."/>
            <person name="Guigo R."/>
            <person name="Kumpf K."/>
            <person name="Tunggal B."/>
            <person name="Cox E.C."/>
            <person name="Quail M.A."/>
            <person name="Platzer M."/>
            <person name="Rosenthal A."/>
            <person name="Noegel A.A."/>
        </authorList>
    </citation>
    <scope>NUCLEOTIDE SEQUENCE [LARGE SCALE GENOMIC DNA]</scope>
    <source>
        <strain>AX4</strain>
    </source>
</reference>
<reference key="2">
    <citation type="journal article" date="2005" name="Nature">
        <title>The genome of the social amoeba Dictyostelium discoideum.</title>
        <authorList>
            <person name="Eichinger L."/>
            <person name="Pachebat J.A."/>
            <person name="Gloeckner G."/>
            <person name="Rajandream M.A."/>
            <person name="Sucgang R."/>
            <person name="Berriman M."/>
            <person name="Song J."/>
            <person name="Olsen R."/>
            <person name="Szafranski K."/>
            <person name="Xu Q."/>
            <person name="Tunggal B."/>
            <person name="Kummerfeld S."/>
            <person name="Madera M."/>
            <person name="Konfortov B.A."/>
            <person name="Rivero F."/>
            <person name="Bankier A.T."/>
            <person name="Lehmann R."/>
            <person name="Hamlin N."/>
            <person name="Davies R."/>
            <person name="Gaudet P."/>
            <person name="Fey P."/>
            <person name="Pilcher K."/>
            <person name="Chen G."/>
            <person name="Saunders D."/>
            <person name="Sodergren E.J."/>
            <person name="Davis P."/>
            <person name="Kerhornou A."/>
            <person name="Nie X."/>
            <person name="Hall N."/>
            <person name="Anjard C."/>
            <person name="Hemphill L."/>
            <person name="Bason N."/>
            <person name="Farbrother P."/>
            <person name="Desany B."/>
            <person name="Just E."/>
            <person name="Morio T."/>
            <person name="Rost R."/>
            <person name="Churcher C.M."/>
            <person name="Cooper J."/>
            <person name="Haydock S."/>
            <person name="van Driessche N."/>
            <person name="Cronin A."/>
            <person name="Goodhead I."/>
            <person name="Muzny D.M."/>
            <person name="Mourier T."/>
            <person name="Pain A."/>
            <person name="Lu M."/>
            <person name="Harper D."/>
            <person name="Lindsay R."/>
            <person name="Hauser H."/>
            <person name="James K.D."/>
            <person name="Quiles M."/>
            <person name="Madan Babu M."/>
            <person name="Saito T."/>
            <person name="Buchrieser C."/>
            <person name="Wardroper A."/>
            <person name="Felder M."/>
            <person name="Thangavelu M."/>
            <person name="Johnson D."/>
            <person name="Knights A."/>
            <person name="Loulseged H."/>
            <person name="Mungall K.L."/>
            <person name="Oliver K."/>
            <person name="Price C."/>
            <person name="Quail M.A."/>
            <person name="Urushihara H."/>
            <person name="Hernandez J."/>
            <person name="Rabbinowitsch E."/>
            <person name="Steffen D."/>
            <person name="Sanders M."/>
            <person name="Ma J."/>
            <person name="Kohara Y."/>
            <person name="Sharp S."/>
            <person name="Simmonds M.N."/>
            <person name="Spiegler S."/>
            <person name="Tivey A."/>
            <person name="Sugano S."/>
            <person name="White B."/>
            <person name="Walker D."/>
            <person name="Woodward J.R."/>
            <person name="Winckler T."/>
            <person name="Tanaka Y."/>
            <person name="Shaulsky G."/>
            <person name="Schleicher M."/>
            <person name="Weinstock G.M."/>
            <person name="Rosenthal A."/>
            <person name="Cox E.C."/>
            <person name="Chisholm R.L."/>
            <person name="Gibbs R.A."/>
            <person name="Loomis W.F."/>
            <person name="Platzer M."/>
            <person name="Kay R.R."/>
            <person name="Williams J.G."/>
            <person name="Dear P.H."/>
            <person name="Noegel A.A."/>
            <person name="Barrell B.G."/>
            <person name="Kuspa A."/>
        </authorList>
    </citation>
    <scope>NUCLEOTIDE SEQUENCE [LARGE SCALE GENOMIC DNA]</scope>
    <source>
        <strain>AX4</strain>
    </source>
</reference>
<name>GMPPA_DICDI</name>
<feature type="chain" id="PRO_0000328172" description="Mannose-1-phosphate guanylyltransferase regulatory subunit alpha">
    <location>
        <begin position="1"/>
        <end position="412"/>
    </location>
</feature>
<feature type="region of interest" description="Substrate-binding domain" evidence="1">
    <location>
        <begin position="6"/>
        <end position="259"/>
    </location>
</feature>
<feature type="region of interest" description="Hexapeptide repeat domain" evidence="1">
    <location>
        <begin position="281"/>
        <end position="412"/>
    </location>
</feature>
<feature type="binding site" evidence="1">
    <location>
        <position position="88"/>
    </location>
    <ligand>
        <name>GDP-alpha-D-mannose</name>
        <dbReference type="ChEBI" id="CHEBI:57527"/>
    </ligand>
</feature>
<feature type="binding site" evidence="1">
    <location>
        <position position="255"/>
    </location>
    <ligand>
        <name>GDP-alpha-D-mannose</name>
        <dbReference type="ChEBI" id="CHEBI:57527"/>
    </ligand>
</feature>
<gene>
    <name type="primary">gmppA</name>
    <name type="synonym">mpgB</name>
    <name type="ORF">DDB_G0271858</name>
</gene>
<comment type="function">
    <text evidence="1">Regulatory subunit of the GMPPA-GMPPB mannose-1-phosphate guanylyltransferase complex; reduces the catalytic activity of GMPPB when part of the complex. Mediates allosteric feedback inhibition of GMPPB catalytic activity upon binding GDP-alpha-D-mannose. Together with GMPPB regulates GDP-alpha-D-mannose levels.</text>
</comment>
<comment type="subunit">
    <text evidence="1">Component of the GMPPA-GMPPB mannose-1-phosphate guanylyltransferase complex composed of 4 gmppA subunits and 8 gmppB subunits; the complex is organized into three layers, a central layer made up of 2 gmppA dimers sandwiched between two layers each made up of 2 gmppB dimers.</text>
</comment>
<comment type="domain">
    <text evidence="1">The N-terminal substrate-binding domain adopts a Rossman-like fold and has a binding pocket for GTP or GDP-alpha-D-mannose.</text>
</comment>
<comment type="domain">
    <text evidence="1">The C-terminal domain consists of a series of tandem hexapeptide repeats that adopt a beta-helix conformation (By similarity). The beta-helix forms several protein interaction surfaces involved in assembly of the GMPPA-GMPPB mannose-1-phosphate guanylyltransferase complex (By similarity). Vertebrate orthologs possess a loop extending from the C-terminal domain (C-loop) involved in interaction with other subunits of the GMPPA-GMPPB complex and involved in allosteric inhibition of gmppB that appears to be absent in Dictyostelium (By similarity).</text>
</comment>
<comment type="similarity">
    <text evidence="2">Belongs to the transferase hexapeptide repeat family.</text>
</comment>
<dbReference type="EMBL" id="AAFI02000007">
    <property type="protein sequence ID" value="EAL71508.1"/>
    <property type="molecule type" value="Genomic_DNA"/>
</dbReference>
<dbReference type="RefSeq" id="XP_645432.1">
    <property type="nucleotide sequence ID" value="XM_640340.1"/>
</dbReference>
<dbReference type="SMR" id="Q86HG0"/>
<dbReference type="FunCoup" id="Q86HG0">
    <property type="interactions" value="149"/>
</dbReference>
<dbReference type="STRING" id="44689.Q86HG0"/>
<dbReference type="PaxDb" id="44689-DDB0231666"/>
<dbReference type="EnsemblProtists" id="EAL71508">
    <property type="protein sequence ID" value="EAL71508"/>
    <property type="gene ID" value="DDB_G0271858"/>
</dbReference>
<dbReference type="GeneID" id="8618172"/>
<dbReference type="KEGG" id="ddi:DDB_G0271858"/>
<dbReference type="dictyBase" id="DDB_G0271858">
    <property type="gene designation" value="gmppA"/>
</dbReference>
<dbReference type="VEuPathDB" id="AmoebaDB:DDB_G0271858"/>
<dbReference type="eggNOG" id="KOG1460">
    <property type="taxonomic scope" value="Eukaryota"/>
</dbReference>
<dbReference type="HOGENOM" id="CLU_029499_3_0_1"/>
<dbReference type="InParanoid" id="Q86HG0"/>
<dbReference type="OMA" id="MPVPNWW"/>
<dbReference type="PhylomeDB" id="Q86HG0"/>
<dbReference type="Reactome" id="R-DDI-446205">
    <property type="pathway name" value="Synthesis of GDP-mannose"/>
</dbReference>
<dbReference type="PRO" id="PR:Q86HG0"/>
<dbReference type="Proteomes" id="UP000002195">
    <property type="component" value="Chromosome 2"/>
</dbReference>
<dbReference type="GO" id="GO:0005737">
    <property type="term" value="C:cytoplasm"/>
    <property type="evidence" value="ECO:0000318"/>
    <property type="project" value="GO_Central"/>
</dbReference>
<dbReference type="GO" id="GO:0004475">
    <property type="term" value="F:mannose-1-phosphate guanylyltransferase (GTP) activity"/>
    <property type="evidence" value="ECO:0000250"/>
    <property type="project" value="dictyBase"/>
</dbReference>
<dbReference type="GO" id="GO:0009298">
    <property type="term" value="P:GDP-mannose biosynthetic process"/>
    <property type="evidence" value="ECO:0000250"/>
    <property type="project" value="dictyBase"/>
</dbReference>
<dbReference type="CDD" id="cd06428">
    <property type="entry name" value="M1P_guanylylT_A_like_N"/>
    <property type="match status" value="1"/>
</dbReference>
<dbReference type="FunFam" id="2.160.10.10:FF:000030">
    <property type="entry name" value="Putative GDP-mannose pyrophosphorylase"/>
    <property type="match status" value="1"/>
</dbReference>
<dbReference type="Gene3D" id="2.160.10.10">
    <property type="entry name" value="Hexapeptide repeat proteins"/>
    <property type="match status" value="1"/>
</dbReference>
<dbReference type="Gene3D" id="3.90.550.10">
    <property type="entry name" value="Spore Coat Polysaccharide Biosynthesis Protein SpsA, Chain A"/>
    <property type="match status" value="1"/>
</dbReference>
<dbReference type="InterPro" id="IPR056729">
    <property type="entry name" value="GMPPB_C"/>
</dbReference>
<dbReference type="InterPro" id="IPR018357">
    <property type="entry name" value="Hexapep_transf_CS"/>
</dbReference>
<dbReference type="InterPro" id="IPR050486">
    <property type="entry name" value="Mannose-1P_guanyltransferase"/>
</dbReference>
<dbReference type="InterPro" id="IPR005835">
    <property type="entry name" value="NTP_transferase_dom"/>
</dbReference>
<dbReference type="InterPro" id="IPR029044">
    <property type="entry name" value="Nucleotide-diphossugar_trans"/>
</dbReference>
<dbReference type="PANTHER" id="PTHR22572">
    <property type="entry name" value="SUGAR-1-PHOSPHATE GUANYL TRANSFERASE"/>
    <property type="match status" value="1"/>
</dbReference>
<dbReference type="Pfam" id="PF25087">
    <property type="entry name" value="GMPPB_C"/>
    <property type="match status" value="1"/>
</dbReference>
<dbReference type="Pfam" id="PF00483">
    <property type="entry name" value="NTP_transferase"/>
    <property type="match status" value="1"/>
</dbReference>
<dbReference type="SUPFAM" id="SSF53448">
    <property type="entry name" value="Nucleotide-diphospho-sugar transferases"/>
    <property type="match status" value="1"/>
</dbReference>
<dbReference type="PROSITE" id="PS00101">
    <property type="entry name" value="HEXAPEP_TRANSFERASES"/>
    <property type="match status" value="2"/>
</dbReference>
<protein>
    <recommendedName>
        <fullName evidence="2">Mannose-1-phosphate guanylyltransferase regulatory subunit alpha</fullName>
    </recommendedName>
    <alternativeName>
        <fullName>GDP-mannose pyrophosphorylase A</fullName>
    </alternativeName>
    <alternativeName>
        <fullName>GTP-mannose-1-phosphate guanylyltransferase alpha</fullName>
    </alternativeName>
</protein>
<sequence length="412" mass="45979">MTTTTTKAIILVGGPSKGTRFRPLSLDVPKLLFPIAGKPMIYHHIEACSKVENMKEIILIGFFQESVLSKFISETSKQLNVAIRYINEEKVLGTAGGLYHFRDIILEGGPSEIFVLHSDICCAFPLNDLLQFHKQHGRSCTIMGTEIESAYANQYGCLVRDEKTAELLHYAEKPETFVSNLINCGVYCFSPQFFDVIGKTMIDLKTSGQNITTDYPEITRKGFDVERLRLEQDIFVPLAGTGFISVYPYVGFWRQIKNAGSSVYCQELYLNHFAKTKPEVLKKGNNIIGNVIIDSTASVDPSAIIGPDVYIGPNVKIGKGVRVIHSIILDQTEIKDHACIIYSIIGWQSLIGVWARIEGIPNYTPFLYSQDKRRGVTIFGAGAQANGEIIVSNCIVMPHKQLDRNYNNEIIL</sequence>
<keyword id="KW-1185">Reference proteome</keyword>
<evidence type="ECO:0000250" key="1">
    <source>
        <dbReference type="UniProtKB" id="Q96IJ6"/>
    </source>
</evidence>
<evidence type="ECO:0000305" key="2"/>
<evidence type="ECO:0000312" key="3">
    <source>
        <dbReference type="Proteomes" id="UP000002195"/>
    </source>
</evidence>
<organism evidence="3">
    <name type="scientific">Dictyostelium discoideum</name>
    <name type="common">Social amoeba</name>
    <dbReference type="NCBI Taxonomy" id="44689"/>
    <lineage>
        <taxon>Eukaryota</taxon>
        <taxon>Amoebozoa</taxon>
        <taxon>Evosea</taxon>
        <taxon>Eumycetozoa</taxon>
        <taxon>Dictyostelia</taxon>
        <taxon>Dictyosteliales</taxon>
        <taxon>Dictyosteliaceae</taxon>
        <taxon>Dictyostelium</taxon>
    </lineage>
</organism>
<proteinExistence type="evidence at transcript level"/>
<accession>Q86HG0</accession>
<accession>Q55AH7</accession>